<gene>
    <name evidence="1" type="primary">rplA</name>
    <name type="ordered locus">CLL_A0228</name>
</gene>
<comment type="function">
    <text evidence="1">Binds directly to 23S rRNA. The L1 stalk is quite mobile in the ribosome, and is involved in E site tRNA release.</text>
</comment>
<comment type="function">
    <text evidence="1">Protein L1 is also a translational repressor protein, it controls the translation of the L11 operon by binding to its mRNA.</text>
</comment>
<comment type="subunit">
    <text evidence="1">Part of the 50S ribosomal subunit.</text>
</comment>
<comment type="similarity">
    <text evidence="1">Belongs to the universal ribosomal protein uL1 family.</text>
</comment>
<dbReference type="EMBL" id="CP001056">
    <property type="protein sequence ID" value="ACD22701.1"/>
    <property type="molecule type" value="Genomic_DNA"/>
</dbReference>
<dbReference type="SMR" id="B2TIG5"/>
<dbReference type="KEGG" id="cbk:CLL_A0228"/>
<dbReference type="PATRIC" id="fig|935198.13.peg.202"/>
<dbReference type="HOGENOM" id="CLU_062853_0_0_9"/>
<dbReference type="Proteomes" id="UP000001195">
    <property type="component" value="Chromosome"/>
</dbReference>
<dbReference type="GO" id="GO:0015934">
    <property type="term" value="C:large ribosomal subunit"/>
    <property type="evidence" value="ECO:0007669"/>
    <property type="project" value="InterPro"/>
</dbReference>
<dbReference type="GO" id="GO:0019843">
    <property type="term" value="F:rRNA binding"/>
    <property type="evidence" value="ECO:0007669"/>
    <property type="project" value="UniProtKB-UniRule"/>
</dbReference>
<dbReference type="GO" id="GO:0003735">
    <property type="term" value="F:structural constituent of ribosome"/>
    <property type="evidence" value="ECO:0007669"/>
    <property type="project" value="InterPro"/>
</dbReference>
<dbReference type="GO" id="GO:0000049">
    <property type="term" value="F:tRNA binding"/>
    <property type="evidence" value="ECO:0007669"/>
    <property type="project" value="UniProtKB-KW"/>
</dbReference>
<dbReference type="GO" id="GO:0006417">
    <property type="term" value="P:regulation of translation"/>
    <property type="evidence" value="ECO:0007669"/>
    <property type="project" value="UniProtKB-KW"/>
</dbReference>
<dbReference type="GO" id="GO:0006412">
    <property type="term" value="P:translation"/>
    <property type="evidence" value="ECO:0007669"/>
    <property type="project" value="UniProtKB-UniRule"/>
</dbReference>
<dbReference type="CDD" id="cd00403">
    <property type="entry name" value="Ribosomal_L1"/>
    <property type="match status" value="1"/>
</dbReference>
<dbReference type="FunFam" id="3.40.50.790:FF:000001">
    <property type="entry name" value="50S ribosomal protein L1"/>
    <property type="match status" value="1"/>
</dbReference>
<dbReference type="Gene3D" id="3.30.190.20">
    <property type="match status" value="1"/>
</dbReference>
<dbReference type="Gene3D" id="3.40.50.790">
    <property type="match status" value="1"/>
</dbReference>
<dbReference type="HAMAP" id="MF_01318_B">
    <property type="entry name" value="Ribosomal_uL1_B"/>
    <property type="match status" value="1"/>
</dbReference>
<dbReference type="InterPro" id="IPR005878">
    <property type="entry name" value="Ribosom_uL1_bac-type"/>
</dbReference>
<dbReference type="InterPro" id="IPR002143">
    <property type="entry name" value="Ribosomal_uL1"/>
</dbReference>
<dbReference type="InterPro" id="IPR023674">
    <property type="entry name" value="Ribosomal_uL1-like"/>
</dbReference>
<dbReference type="InterPro" id="IPR028364">
    <property type="entry name" value="Ribosomal_uL1/biogenesis"/>
</dbReference>
<dbReference type="InterPro" id="IPR016095">
    <property type="entry name" value="Ribosomal_uL1_3-a/b-sand"/>
</dbReference>
<dbReference type="InterPro" id="IPR023673">
    <property type="entry name" value="Ribosomal_uL1_CS"/>
</dbReference>
<dbReference type="NCBIfam" id="TIGR01169">
    <property type="entry name" value="rplA_bact"/>
    <property type="match status" value="1"/>
</dbReference>
<dbReference type="PANTHER" id="PTHR36427">
    <property type="entry name" value="54S RIBOSOMAL PROTEIN L1, MITOCHONDRIAL"/>
    <property type="match status" value="1"/>
</dbReference>
<dbReference type="PANTHER" id="PTHR36427:SF3">
    <property type="entry name" value="LARGE RIBOSOMAL SUBUNIT PROTEIN UL1M"/>
    <property type="match status" value="1"/>
</dbReference>
<dbReference type="Pfam" id="PF00687">
    <property type="entry name" value="Ribosomal_L1"/>
    <property type="match status" value="1"/>
</dbReference>
<dbReference type="PIRSF" id="PIRSF002155">
    <property type="entry name" value="Ribosomal_L1"/>
    <property type="match status" value="1"/>
</dbReference>
<dbReference type="SUPFAM" id="SSF56808">
    <property type="entry name" value="Ribosomal protein L1"/>
    <property type="match status" value="1"/>
</dbReference>
<dbReference type="PROSITE" id="PS01199">
    <property type="entry name" value="RIBOSOMAL_L1"/>
    <property type="match status" value="1"/>
</dbReference>
<accession>B2TIG5</accession>
<protein>
    <recommendedName>
        <fullName evidence="1">Large ribosomal subunit protein uL1</fullName>
    </recommendedName>
    <alternativeName>
        <fullName evidence="2">50S ribosomal protein L1</fullName>
    </alternativeName>
</protein>
<feature type="chain" id="PRO_1000141380" description="Large ribosomal subunit protein uL1">
    <location>
        <begin position="1"/>
        <end position="229"/>
    </location>
</feature>
<proteinExistence type="inferred from homology"/>
<sequence length="229" mass="24564">MGKKYIESSKLIDKSALYNSTEALDLTVKTAKANFDETIELHVRLGVDPRHADQQVRGAVVLPNGTGKTVRVLVFAKGDKATEAQEAGADFVGAEDLVQKIQSENWFDYDVVVATPDMMGVVGRIGRVLGPKGLMPNPKSGTVTFDVAKAIAEIKAGKVEYRVDKTSIVHCPIGKKSFGTEKLKENFTTLMEALVKAKPAAAKGQYLKSITVSSTMGPGAKINPTKALD</sequence>
<evidence type="ECO:0000255" key="1">
    <source>
        <dbReference type="HAMAP-Rule" id="MF_01318"/>
    </source>
</evidence>
<evidence type="ECO:0000305" key="2"/>
<keyword id="KW-0678">Repressor</keyword>
<keyword id="KW-0687">Ribonucleoprotein</keyword>
<keyword id="KW-0689">Ribosomal protein</keyword>
<keyword id="KW-0694">RNA-binding</keyword>
<keyword id="KW-0699">rRNA-binding</keyword>
<keyword id="KW-0810">Translation regulation</keyword>
<keyword id="KW-0820">tRNA-binding</keyword>
<reference key="1">
    <citation type="submission" date="2008-04" db="EMBL/GenBank/DDBJ databases">
        <title>Complete sequence of Clostridium botulinum strain Eklund.</title>
        <authorList>
            <person name="Brinkac L.M."/>
            <person name="Brown J.L."/>
            <person name="Bruce D."/>
            <person name="Detter C."/>
            <person name="Munk C."/>
            <person name="Smith L.A."/>
            <person name="Smith T.J."/>
            <person name="Sutton G."/>
            <person name="Brettin T.S."/>
        </authorList>
    </citation>
    <scope>NUCLEOTIDE SEQUENCE [LARGE SCALE GENOMIC DNA]</scope>
    <source>
        <strain>Eklund 17B / Type B</strain>
    </source>
</reference>
<organism>
    <name type="scientific">Clostridium botulinum (strain Eklund 17B / Type B)</name>
    <dbReference type="NCBI Taxonomy" id="935198"/>
    <lineage>
        <taxon>Bacteria</taxon>
        <taxon>Bacillati</taxon>
        <taxon>Bacillota</taxon>
        <taxon>Clostridia</taxon>
        <taxon>Eubacteriales</taxon>
        <taxon>Clostridiaceae</taxon>
        <taxon>Clostridium</taxon>
    </lineage>
</organism>
<name>RL1_CLOBB</name>